<organism>
    <name type="scientific">Oryza sativa subsp. japonica</name>
    <name type="common">Rice</name>
    <dbReference type="NCBI Taxonomy" id="39947"/>
    <lineage>
        <taxon>Eukaryota</taxon>
        <taxon>Viridiplantae</taxon>
        <taxon>Streptophyta</taxon>
        <taxon>Embryophyta</taxon>
        <taxon>Tracheophyta</taxon>
        <taxon>Spermatophyta</taxon>
        <taxon>Magnoliopsida</taxon>
        <taxon>Liliopsida</taxon>
        <taxon>Poales</taxon>
        <taxon>Poaceae</taxon>
        <taxon>BOP clade</taxon>
        <taxon>Oryzoideae</taxon>
        <taxon>Oryzeae</taxon>
        <taxon>Oryzinae</taxon>
        <taxon>Oryza</taxon>
        <taxon>Oryza sativa</taxon>
    </lineage>
</organism>
<accession>Q5Z678</accession>
<accession>B9FQM3</accession>
<protein>
    <recommendedName>
        <fullName>IAA-amino acid hydrolase ILR1-like 6</fullName>
        <ecNumber>3.5.1.-</ecNumber>
    </recommendedName>
</protein>
<proteinExistence type="evidence at transcript level"/>
<dbReference type="EC" id="3.5.1.-"/>
<dbReference type="EMBL" id="AP005457">
    <property type="protein sequence ID" value="BAD54513.1"/>
    <property type="molecule type" value="Genomic_DNA"/>
</dbReference>
<dbReference type="EMBL" id="AP008212">
    <property type="protein sequence ID" value="BAF20336.1"/>
    <property type="molecule type" value="Genomic_DNA"/>
</dbReference>
<dbReference type="EMBL" id="AP014962">
    <property type="protein sequence ID" value="BAS99237.1"/>
    <property type="molecule type" value="Genomic_DNA"/>
</dbReference>
<dbReference type="EMBL" id="CM000143">
    <property type="protein sequence ID" value="EEE66265.1"/>
    <property type="molecule type" value="Genomic_DNA"/>
</dbReference>
<dbReference type="EMBL" id="AK107208">
    <property type="status" value="NOT_ANNOTATED_CDS"/>
    <property type="molecule type" value="mRNA"/>
</dbReference>
<dbReference type="RefSeq" id="XP_015640989.1">
    <property type="nucleotide sequence ID" value="XM_015785503.1"/>
</dbReference>
<dbReference type="SMR" id="Q5Z678"/>
<dbReference type="FunCoup" id="Q5Z678">
    <property type="interactions" value="217"/>
</dbReference>
<dbReference type="STRING" id="39947.Q5Z678"/>
<dbReference type="MEROPS" id="M20.A05"/>
<dbReference type="PaxDb" id="39947-Q5Z678"/>
<dbReference type="EnsemblPlants" id="Os06t0691400-01">
    <property type="protein sequence ID" value="Os06t0691400-01"/>
    <property type="gene ID" value="Os06g0691400"/>
</dbReference>
<dbReference type="Gramene" id="Os06t0691400-01">
    <property type="protein sequence ID" value="Os06t0691400-01"/>
    <property type="gene ID" value="Os06g0691400"/>
</dbReference>
<dbReference type="KEGG" id="dosa:Os06g0691400"/>
<dbReference type="eggNOG" id="ENOG502QQEM">
    <property type="taxonomic scope" value="Eukaryota"/>
</dbReference>
<dbReference type="HOGENOM" id="CLU_023257_0_0_1"/>
<dbReference type="InParanoid" id="Q5Z678"/>
<dbReference type="OMA" id="LMMVAQP"/>
<dbReference type="OrthoDB" id="6119954at2759"/>
<dbReference type="PlantReactome" id="R-OSA-1119580">
    <property type="pathway name" value="IAA biosynthesis II"/>
</dbReference>
<dbReference type="Proteomes" id="UP000000763">
    <property type="component" value="Chromosome 6"/>
</dbReference>
<dbReference type="Proteomes" id="UP000007752">
    <property type="component" value="Chromosome 6"/>
</dbReference>
<dbReference type="Proteomes" id="UP000059680">
    <property type="component" value="Chromosome 6"/>
</dbReference>
<dbReference type="GO" id="GO:0016787">
    <property type="term" value="F:hydrolase activity"/>
    <property type="evidence" value="ECO:0000318"/>
    <property type="project" value="GO_Central"/>
</dbReference>
<dbReference type="GO" id="GO:0009850">
    <property type="term" value="P:auxin metabolic process"/>
    <property type="evidence" value="ECO:0007669"/>
    <property type="project" value="InterPro"/>
</dbReference>
<dbReference type="GO" id="GO:0009694">
    <property type="term" value="P:jasmonic acid metabolic process"/>
    <property type="evidence" value="ECO:0000318"/>
    <property type="project" value="GO_Central"/>
</dbReference>
<dbReference type="CDD" id="cd08017">
    <property type="entry name" value="M20_IAA_Hyd"/>
    <property type="match status" value="1"/>
</dbReference>
<dbReference type="FunFam" id="3.30.70.360:FF:000001">
    <property type="entry name" value="N-acetyldiaminopimelate deacetylase"/>
    <property type="match status" value="1"/>
</dbReference>
<dbReference type="Gene3D" id="3.30.70.360">
    <property type="match status" value="1"/>
</dbReference>
<dbReference type="Gene3D" id="3.40.630.10">
    <property type="entry name" value="Zn peptidases"/>
    <property type="match status" value="1"/>
</dbReference>
<dbReference type="InterPro" id="IPR017439">
    <property type="entry name" value="Amidohydrolase"/>
</dbReference>
<dbReference type="InterPro" id="IPR036264">
    <property type="entry name" value="Bact_exopeptidase_dim_dom"/>
</dbReference>
<dbReference type="InterPro" id="IPR044757">
    <property type="entry name" value="ILR1-like_Hyd"/>
</dbReference>
<dbReference type="InterPro" id="IPR002933">
    <property type="entry name" value="Peptidase_M20"/>
</dbReference>
<dbReference type="NCBIfam" id="TIGR01891">
    <property type="entry name" value="amidohydrolases"/>
    <property type="match status" value="1"/>
</dbReference>
<dbReference type="PANTHER" id="PTHR11014:SF62">
    <property type="entry name" value="IAA-AMINO ACID HYDROLASE ILR1-LIKE 6"/>
    <property type="match status" value="1"/>
</dbReference>
<dbReference type="PANTHER" id="PTHR11014">
    <property type="entry name" value="PEPTIDASE M20 FAMILY MEMBER"/>
    <property type="match status" value="1"/>
</dbReference>
<dbReference type="Pfam" id="PF01546">
    <property type="entry name" value="Peptidase_M20"/>
    <property type="match status" value="1"/>
</dbReference>
<dbReference type="SUPFAM" id="SSF55031">
    <property type="entry name" value="Bacterial exopeptidase dimerisation domain"/>
    <property type="match status" value="1"/>
</dbReference>
<dbReference type="SUPFAM" id="SSF53187">
    <property type="entry name" value="Zn-dependent exopeptidases"/>
    <property type="match status" value="1"/>
</dbReference>
<reference key="1">
    <citation type="journal article" date="2005" name="Nature">
        <title>The map-based sequence of the rice genome.</title>
        <authorList>
            <consortium name="International rice genome sequencing project (IRGSP)"/>
        </authorList>
    </citation>
    <scope>NUCLEOTIDE SEQUENCE [LARGE SCALE GENOMIC DNA]</scope>
    <source>
        <strain>cv. Nipponbare</strain>
    </source>
</reference>
<reference key="2">
    <citation type="journal article" date="2008" name="Nucleic Acids Res.">
        <title>The rice annotation project database (RAP-DB): 2008 update.</title>
        <authorList>
            <consortium name="The rice annotation project (RAP)"/>
        </authorList>
    </citation>
    <scope>GENOME REANNOTATION</scope>
    <source>
        <strain>cv. Nipponbare</strain>
    </source>
</reference>
<reference key="3">
    <citation type="journal article" date="2013" name="Rice">
        <title>Improvement of the Oryza sativa Nipponbare reference genome using next generation sequence and optical map data.</title>
        <authorList>
            <person name="Kawahara Y."/>
            <person name="de la Bastide M."/>
            <person name="Hamilton J.P."/>
            <person name="Kanamori H."/>
            <person name="McCombie W.R."/>
            <person name="Ouyang S."/>
            <person name="Schwartz D.C."/>
            <person name="Tanaka T."/>
            <person name="Wu J."/>
            <person name="Zhou S."/>
            <person name="Childs K.L."/>
            <person name="Davidson R.M."/>
            <person name="Lin H."/>
            <person name="Quesada-Ocampo L."/>
            <person name="Vaillancourt B."/>
            <person name="Sakai H."/>
            <person name="Lee S.S."/>
            <person name="Kim J."/>
            <person name="Numa H."/>
            <person name="Itoh T."/>
            <person name="Buell C.R."/>
            <person name="Matsumoto T."/>
        </authorList>
    </citation>
    <scope>GENOME REANNOTATION</scope>
    <source>
        <strain>cv. Nipponbare</strain>
    </source>
</reference>
<reference key="4">
    <citation type="journal article" date="2005" name="PLoS Biol.">
        <title>The genomes of Oryza sativa: a history of duplications.</title>
        <authorList>
            <person name="Yu J."/>
            <person name="Wang J."/>
            <person name="Lin W."/>
            <person name="Li S."/>
            <person name="Li H."/>
            <person name="Zhou J."/>
            <person name="Ni P."/>
            <person name="Dong W."/>
            <person name="Hu S."/>
            <person name="Zeng C."/>
            <person name="Zhang J."/>
            <person name="Zhang Y."/>
            <person name="Li R."/>
            <person name="Xu Z."/>
            <person name="Li S."/>
            <person name="Li X."/>
            <person name="Zheng H."/>
            <person name="Cong L."/>
            <person name="Lin L."/>
            <person name="Yin J."/>
            <person name="Geng J."/>
            <person name="Li G."/>
            <person name="Shi J."/>
            <person name="Liu J."/>
            <person name="Lv H."/>
            <person name="Li J."/>
            <person name="Wang J."/>
            <person name="Deng Y."/>
            <person name="Ran L."/>
            <person name="Shi X."/>
            <person name="Wang X."/>
            <person name="Wu Q."/>
            <person name="Li C."/>
            <person name="Ren X."/>
            <person name="Wang J."/>
            <person name="Wang X."/>
            <person name="Li D."/>
            <person name="Liu D."/>
            <person name="Zhang X."/>
            <person name="Ji Z."/>
            <person name="Zhao W."/>
            <person name="Sun Y."/>
            <person name="Zhang Z."/>
            <person name="Bao J."/>
            <person name="Han Y."/>
            <person name="Dong L."/>
            <person name="Ji J."/>
            <person name="Chen P."/>
            <person name="Wu S."/>
            <person name="Liu J."/>
            <person name="Xiao Y."/>
            <person name="Bu D."/>
            <person name="Tan J."/>
            <person name="Yang L."/>
            <person name="Ye C."/>
            <person name="Zhang J."/>
            <person name="Xu J."/>
            <person name="Zhou Y."/>
            <person name="Yu Y."/>
            <person name="Zhang B."/>
            <person name="Zhuang S."/>
            <person name="Wei H."/>
            <person name="Liu B."/>
            <person name="Lei M."/>
            <person name="Yu H."/>
            <person name="Li Y."/>
            <person name="Xu H."/>
            <person name="Wei S."/>
            <person name="He X."/>
            <person name="Fang L."/>
            <person name="Zhang Z."/>
            <person name="Zhang Y."/>
            <person name="Huang X."/>
            <person name="Su Z."/>
            <person name="Tong W."/>
            <person name="Li J."/>
            <person name="Tong Z."/>
            <person name="Li S."/>
            <person name="Ye J."/>
            <person name="Wang L."/>
            <person name="Fang L."/>
            <person name="Lei T."/>
            <person name="Chen C.-S."/>
            <person name="Chen H.-C."/>
            <person name="Xu Z."/>
            <person name="Li H."/>
            <person name="Huang H."/>
            <person name="Zhang F."/>
            <person name="Xu H."/>
            <person name="Li N."/>
            <person name="Zhao C."/>
            <person name="Li S."/>
            <person name="Dong L."/>
            <person name="Huang Y."/>
            <person name="Li L."/>
            <person name="Xi Y."/>
            <person name="Qi Q."/>
            <person name="Li W."/>
            <person name="Zhang B."/>
            <person name="Hu W."/>
            <person name="Zhang Y."/>
            <person name="Tian X."/>
            <person name="Jiao Y."/>
            <person name="Liang X."/>
            <person name="Jin J."/>
            <person name="Gao L."/>
            <person name="Zheng W."/>
            <person name="Hao B."/>
            <person name="Liu S.-M."/>
            <person name="Wang W."/>
            <person name="Yuan L."/>
            <person name="Cao M."/>
            <person name="McDermott J."/>
            <person name="Samudrala R."/>
            <person name="Wang J."/>
            <person name="Wong G.K.-S."/>
            <person name="Yang H."/>
        </authorList>
    </citation>
    <scope>NUCLEOTIDE SEQUENCE [LARGE SCALE GENOMIC DNA]</scope>
    <source>
        <strain>cv. Nipponbare</strain>
    </source>
</reference>
<reference key="5">
    <citation type="journal article" date="2003" name="Science">
        <title>Collection, mapping, and annotation of over 28,000 cDNA clones from japonica rice.</title>
        <authorList>
            <consortium name="The rice full-length cDNA consortium"/>
        </authorList>
    </citation>
    <scope>NUCLEOTIDE SEQUENCE [LARGE SCALE MRNA]</scope>
    <source>
        <strain>cv. Nipponbare</strain>
    </source>
</reference>
<gene>
    <name type="primary">ILL6</name>
    <name type="ordered locus">Os06g0691400</name>
    <name type="ordered locus">LOC_Os06g47620</name>
    <name evidence="5" type="ORF">OsJ_22451</name>
    <name type="ORF">P0532H03.15</name>
</gene>
<keyword id="KW-0378">Hydrolase</keyword>
<keyword id="KW-1185">Reference proteome</keyword>
<keyword id="KW-0732">Signal</keyword>
<sequence>MEHGGHELAVVVLVLLLLVSATSCTFLEEDVILGTVEEAKVARLGGGGGGGSKGANASTRRADNTCAGVGVGVGGGGGGGGGGGGGGRGRFYLGWKEEIAGMAGRPETAAWLRAVRRRIHERPELAYEEVETSRLVRDELDAMGVGFRHPVARTGVVANIGTGRPPVVALRADMDALPIQEAVEWEHKSKNPGKMHACGHDAHVAMLLGAAKILKAREHHLRGTVRLLFQPAEESGAGAKRMIEGGALEDVEAIFAVHVSHQHPTSVIGSRTGPLLAGCGFFKAVIHGGRRSGDAVLAAASTIISLQSIVSREADPLDSQVVSVAMVNGSDHPAATARAAAAEEEEEFVLGGTFRAFSNASFYQVRRRIEEVITAQARVHGCEAAVDFFENQSFYPPTVNDARMYAHVKAVAGELLGAGSYRDVPPMMGAEDFSFYSQVVPAGFYYIGVRNETLGSVHTGHSPYFMIDEDVLPTGAAFHAAIAERYLANHSPSSSSSSDSDDPDVELEAS</sequence>
<comment type="function">
    <text evidence="1">Hydrolyzes certain amino acid conjugates of the plant growth regulator indole-3-acetic acid (IAA).</text>
</comment>
<comment type="similarity">
    <text evidence="4">Belongs to the peptidase M20 family.</text>
</comment>
<evidence type="ECO:0000250" key="1"/>
<evidence type="ECO:0000255" key="2"/>
<evidence type="ECO:0000256" key="3">
    <source>
        <dbReference type="SAM" id="MobiDB-lite"/>
    </source>
</evidence>
<evidence type="ECO:0000305" key="4"/>
<evidence type="ECO:0000312" key="5">
    <source>
        <dbReference type="EMBL" id="EEE66265.1"/>
    </source>
</evidence>
<name>ILL6_ORYSJ</name>
<feature type="signal peptide" evidence="2">
    <location>
        <begin position="1"/>
        <end position="24"/>
    </location>
</feature>
<feature type="chain" id="PRO_0000351642" description="IAA-amino acid hydrolase ILR1-like 6">
    <location>
        <begin position="25"/>
        <end position="510"/>
    </location>
</feature>
<feature type="region of interest" description="Disordered" evidence="3">
    <location>
        <begin position="490"/>
        <end position="510"/>
    </location>
</feature>
<feature type="compositionally biased region" description="Acidic residues" evidence="3">
    <location>
        <begin position="499"/>
        <end position="510"/>
    </location>
</feature>
<feature type="sequence conflict" description="In Ref. 5; AK107208." evidence="4" ref="5">
    <original>V</original>
    <variation>A</variation>
    <location>
        <position position="204"/>
    </location>
</feature>
<feature type="sequence conflict" description="In Ref. 5; AK107208." evidence="4" ref="5">
    <original>I</original>
    <variation>V</variation>
    <location>
        <position position="447"/>
    </location>
</feature>